<comment type="subunit">
    <text evidence="1">Part of the 50S ribosomal subunit.</text>
</comment>
<comment type="similarity">
    <text evidence="1">Belongs to the universal ribosomal protein uL30 family.</text>
</comment>
<gene>
    <name evidence="1" type="primary">rpmD</name>
    <name type="ordered locus">RL1792</name>
</gene>
<protein>
    <recommendedName>
        <fullName evidence="1">Large ribosomal subunit protein uL30</fullName>
    </recommendedName>
    <alternativeName>
        <fullName evidence="2">50S ribosomal protein L30</fullName>
    </alternativeName>
</protein>
<feature type="chain" id="PRO_0000347135" description="Large ribosomal subunit protein uL30">
    <location>
        <begin position="1"/>
        <end position="69"/>
    </location>
</feature>
<name>RL30_RHIJ3</name>
<accession>Q1MIC3</accession>
<dbReference type="EMBL" id="AM236080">
    <property type="protein sequence ID" value="CAK07287.1"/>
    <property type="molecule type" value="Genomic_DNA"/>
</dbReference>
<dbReference type="RefSeq" id="WP_003547566.1">
    <property type="nucleotide sequence ID" value="NC_008380.1"/>
</dbReference>
<dbReference type="SMR" id="Q1MIC3"/>
<dbReference type="EnsemblBacteria" id="CAK07287">
    <property type="protein sequence ID" value="CAK07287"/>
    <property type="gene ID" value="RL1792"/>
</dbReference>
<dbReference type="GeneID" id="91148146"/>
<dbReference type="KEGG" id="rle:RL1792"/>
<dbReference type="eggNOG" id="COG1841">
    <property type="taxonomic scope" value="Bacteria"/>
</dbReference>
<dbReference type="HOGENOM" id="CLU_131047_1_2_5"/>
<dbReference type="Proteomes" id="UP000006575">
    <property type="component" value="Chromosome"/>
</dbReference>
<dbReference type="GO" id="GO:0022625">
    <property type="term" value="C:cytosolic large ribosomal subunit"/>
    <property type="evidence" value="ECO:0007669"/>
    <property type="project" value="TreeGrafter"/>
</dbReference>
<dbReference type="GO" id="GO:0003735">
    <property type="term" value="F:structural constituent of ribosome"/>
    <property type="evidence" value="ECO:0007669"/>
    <property type="project" value="InterPro"/>
</dbReference>
<dbReference type="GO" id="GO:0006412">
    <property type="term" value="P:translation"/>
    <property type="evidence" value="ECO:0007669"/>
    <property type="project" value="UniProtKB-UniRule"/>
</dbReference>
<dbReference type="CDD" id="cd01658">
    <property type="entry name" value="Ribosomal_L30"/>
    <property type="match status" value="1"/>
</dbReference>
<dbReference type="Gene3D" id="3.30.1390.20">
    <property type="entry name" value="Ribosomal protein L30, ferredoxin-like fold domain"/>
    <property type="match status" value="1"/>
</dbReference>
<dbReference type="HAMAP" id="MF_01371_B">
    <property type="entry name" value="Ribosomal_uL30_B"/>
    <property type="match status" value="1"/>
</dbReference>
<dbReference type="InterPro" id="IPR036919">
    <property type="entry name" value="Ribo_uL30_ferredoxin-like_sf"/>
</dbReference>
<dbReference type="InterPro" id="IPR005996">
    <property type="entry name" value="Ribosomal_uL30_bac-type"/>
</dbReference>
<dbReference type="InterPro" id="IPR016082">
    <property type="entry name" value="Ribosomal_uL30_ferredoxin-like"/>
</dbReference>
<dbReference type="NCBIfam" id="TIGR01308">
    <property type="entry name" value="rpmD_bact"/>
    <property type="match status" value="1"/>
</dbReference>
<dbReference type="PANTHER" id="PTHR15892:SF2">
    <property type="entry name" value="LARGE RIBOSOMAL SUBUNIT PROTEIN UL30M"/>
    <property type="match status" value="1"/>
</dbReference>
<dbReference type="PANTHER" id="PTHR15892">
    <property type="entry name" value="MITOCHONDRIAL RIBOSOMAL PROTEIN L30"/>
    <property type="match status" value="1"/>
</dbReference>
<dbReference type="Pfam" id="PF00327">
    <property type="entry name" value="Ribosomal_L30"/>
    <property type="match status" value="1"/>
</dbReference>
<dbReference type="PIRSF" id="PIRSF002211">
    <property type="entry name" value="Ribosomal_L30_bac-type"/>
    <property type="match status" value="1"/>
</dbReference>
<dbReference type="SUPFAM" id="SSF55129">
    <property type="entry name" value="Ribosomal protein L30p/L7e"/>
    <property type="match status" value="1"/>
</dbReference>
<organism>
    <name type="scientific">Rhizobium johnstonii (strain DSM 114642 / LMG 32736 / 3841)</name>
    <name type="common">Rhizobium leguminosarum bv. viciae</name>
    <dbReference type="NCBI Taxonomy" id="216596"/>
    <lineage>
        <taxon>Bacteria</taxon>
        <taxon>Pseudomonadati</taxon>
        <taxon>Pseudomonadota</taxon>
        <taxon>Alphaproteobacteria</taxon>
        <taxon>Hyphomicrobiales</taxon>
        <taxon>Rhizobiaceae</taxon>
        <taxon>Rhizobium/Agrobacterium group</taxon>
        <taxon>Rhizobium</taxon>
        <taxon>Rhizobium johnstonii</taxon>
    </lineage>
</organism>
<evidence type="ECO:0000255" key="1">
    <source>
        <dbReference type="HAMAP-Rule" id="MF_01371"/>
    </source>
</evidence>
<evidence type="ECO:0000305" key="2"/>
<sequence length="69" mass="7830">MAKATKKAEAKTVTIEQIGSPIRRPDVQQRTLIGLGLNKMHRRRTLEDTPSVRGMIRAVQHLVRVVDEK</sequence>
<proteinExistence type="inferred from homology"/>
<keyword id="KW-0687">Ribonucleoprotein</keyword>
<keyword id="KW-0689">Ribosomal protein</keyword>
<reference key="1">
    <citation type="journal article" date="2006" name="Genome Biol.">
        <title>The genome of Rhizobium leguminosarum has recognizable core and accessory components.</title>
        <authorList>
            <person name="Young J.P.W."/>
            <person name="Crossman L.C."/>
            <person name="Johnston A.W.B."/>
            <person name="Thomson N.R."/>
            <person name="Ghazoui Z.F."/>
            <person name="Hull K.H."/>
            <person name="Wexler M."/>
            <person name="Curson A.R.J."/>
            <person name="Todd J.D."/>
            <person name="Poole P.S."/>
            <person name="Mauchline T.H."/>
            <person name="East A.K."/>
            <person name="Quail M.A."/>
            <person name="Churcher C."/>
            <person name="Arrowsmith C."/>
            <person name="Cherevach I."/>
            <person name="Chillingworth T."/>
            <person name="Clarke K."/>
            <person name="Cronin A."/>
            <person name="Davis P."/>
            <person name="Fraser A."/>
            <person name="Hance Z."/>
            <person name="Hauser H."/>
            <person name="Jagels K."/>
            <person name="Moule S."/>
            <person name="Mungall K."/>
            <person name="Norbertczak H."/>
            <person name="Rabbinowitsch E."/>
            <person name="Sanders M."/>
            <person name="Simmonds M."/>
            <person name="Whitehead S."/>
            <person name="Parkhill J."/>
        </authorList>
    </citation>
    <scope>NUCLEOTIDE SEQUENCE [LARGE SCALE GENOMIC DNA]</scope>
    <source>
        <strain>DSM 114642 / LMG 32736 / 3841</strain>
    </source>
</reference>